<organism>
    <name type="scientific">Nocardioides sp. (strain ATCC BAA-499 / JS614)</name>
    <dbReference type="NCBI Taxonomy" id="196162"/>
    <lineage>
        <taxon>Bacteria</taxon>
        <taxon>Bacillati</taxon>
        <taxon>Actinomycetota</taxon>
        <taxon>Actinomycetes</taxon>
        <taxon>Propionibacteriales</taxon>
        <taxon>Nocardioidaceae</taxon>
        <taxon>Nocardioides</taxon>
    </lineage>
</organism>
<protein>
    <recommendedName>
        <fullName evidence="1">Biotin synthase</fullName>
        <ecNumber evidence="1">2.8.1.6</ecNumber>
    </recommendedName>
</protein>
<comment type="function">
    <text evidence="1">Catalyzes the conversion of dethiobiotin (DTB) to biotin by the insertion of a sulfur atom into dethiobiotin via a radical-based mechanism.</text>
</comment>
<comment type="catalytic activity">
    <reaction evidence="1">
        <text>(4R,5S)-dethiobiotin + (sulfur carrier)-SH + 2 reduced [2Fe-2S]-[ferredoxin] + 2 S-adenosyl-L-methionine = (sulfur carrier)-H + biotin + 2 5'-deoxyadenosine + 2 L-methionine + 2 oxidized [2Fe-2S]-[ferredoxin]</text>
        <dbReference type="Rhea" id="RHEA:22060"/>
        <dbReference type="Rhea" id="RHEA-COMP:10000"/>
        <dbReference type="Rhea" id="RHEA-COMP:10001"/>
        <dbReference type="Rhea" id="RHEA-COMP:14737"/>
        <dbReference type="Rhea" id="RHEA-COMP:14739"/>
        <dbReference type="ChEBI" id="CHEBI:17319"/>
        <dbReference type="ChEBI" id="CHEBI:29917"/>
        <dbReference type="ChEBI" id="CHEBI:33737"/>
        <dbReference type="ChEBI" id="CHEBI:33738"/>
        <dbReference type="ChEBI" id="CHEBI:57586"/>
        <dbReference type="ChEBI" id="CHEBI:57844"/>
        <dbReference type="ChEBI" id="CHEBI:59789"/>
        <dbReference type="ChEBI" id="CHEBI:64428"/>
        <dbReference type="ChEBI" id="CHEBI:149473"/>
        <dbReference type="EC" id="2.8.1.6"/>
    </reaction>
</comment>
<comment type="cofactor">
    <cofactor evidence="1">
        <name>[4Fe-4S] cluster</name>
        <dbReference type="ChEBI" id="CHEBI:49883"/>
    </cofactor>
    <text evidence="1">Binds 1 [4Fe-4S] cluster. The cluster is coordinated with 3 cysteines and an exchangeable S-adenosyl-L-methionine.</text>
</comment>
<comment type="cofactor">
    <cofactor evidence="1">
        <name>[2Fe-2S] cluster</name>
        <dbReference type="ChEBI" id="CHEBI:190135"/>
    </cofactor>
    <text evidence="1">Binds 1 [2Fe-2S] cluster. The cluster is coordinated with 3 cysteines and 1 arginine.</text>
</comment>
<comment type="pathway">
    <text evidence="1">Cofactor biosynthesis; biotin biosynthesis; biotin from 7,8-diaminononanoate: step 2/2.</text>
</comment>
<comment type="subunit">
    <text evidence="1">Homodimer.</text>
</comment>
<comment type="similarity">
    <text evidence="1">Belongs to the radical SAM superfamily. Biotin synthase family.</text>
</comment>
<proteinExistence type="inferred from homology"/>
<evidence type="ECO:0000255" key="1">
    <source>
        <dbReference type="HAMAP-Rule" id="MF_01694"/>
    </source>
</evidence>
<evidence type="ECO:0000255" key="2">
    <source>
        <dbReference type="PROSITE-ProRule" id="PRU01266"/>
    </source>
</evidence>
<evidence type="ECO:0000256" key="3">
    <source>
        <dbReference type="SAM" id="MobiDB-lite"/>
    </source>
</evidence>
<feature type="chain" id="PRO_0000381509" description="Biotin synthase">
    <location>
        <begin position="1"/>
        <end position="374"/>
    </location>
</feature>
<feature type="domain" description="Radical SAM core" evidence="2">
    <location>
        <begin position="51"/>
        <end position="278"/>
    </location>
</feature>
<feature type="region of interest" description="Disordered" evidence="3">
    <location>
        <begin position="346"/>
        <end position="374"/>
    </location>
</feature>
<feature type="binding site" evidence="1">
    <location>
        <position position="66"/>
    </location>
    <ligand>
        <name>[4Fe-4S] cluster</name>
        <dbReference type="ChEBI" id="CHEBI:49883"/>
        <note>4Fe-4S-S-AdoMet</note>
    </ligand>
</feature>
<feature type="binding site" evidence="1">
    <location>
        <position position="70"/>
    </location>
    <ligand>
        <name>[4Fe-4S] cluster</name>
        <dbReference type="ChEBI" id="CHEBI:49883"/>
        <note>4Fe-4S-S-AdoMet</note>
    </ligand>
</feature>
<feature type="binding site" evidence="1">
    <location>
        <position position="73"/>
    </location>
    <ligand>
        <name>[4Fe-4S] cluster</name>
        <dbReference type="ChEBI" id="CHEBI:49883"/>
        <note>4Fe-4S-S-AdoMet</note>
    </ligand>
</feature>
<feature type="binding site" evidence="1">
    <location>
        <position position="110"/>
    </location>
    <ligand>
        <name>[2Fe-2S] cluster</name>
        <dbReference type="ChEBI" id="CHEBI:190135"/>
    </ligand>
</feature>
<feature type="binding site" evidence="1">
    <location>
        <position position="143"/>
    </location>
    <ligand>
        <name>[2Fe-2S] cluster</name>
        <dbReference type="ChEBI" id="CHEBI:190135"/>
    </ligand>
</feature>
<feature type="binding site" evidence="1">
    <location>
        <position position="203"/>
    </location>
    <ligand>
        <name>[2Fe-2S] cluster</name>
        <dbReference type="ChEBI" id="CHEBI:190135"/>
    </ligand>
</feature>
<feature type="binding site" evidence="1">
    <location>
        <position position="273"/>
    </location>
    <ligand>
        <name>[2Fe-2S] cluster</name>
        <dbReference type="ChEBI" id="CHEBI:190135"/>
    </ligand>
</feature>
<keyword id="KW-0001">2Fe-2S</keyword>
<keyword id="KW-0004">4Fe-4S</keyword>
<keyword id="KW-0093">Biotin biosynthesis</keyword>
<keyword id="KW-0408">Iron</keyword>
<keyword id="KW-0411">Iron-sulfur</keyword>
<keyword id="KW-0479">Metal-binding</keyword>
<keyword id="KW-1185">Reference proteome</keyword>
<keyword id="KW-0949">S-adenosyl-L-methionine</keyword>
<keyword id="KW-0808">Transferase</keyword>
<sequence>MQTSFDHLADRILAGGDATPADALAVLRADEKDLLHVVAAAGRLRRARFGNTVKVNYLVNLKSGLCPEDCHYCSQALGSRAPILKYNWLSSEEVLEQAGAGLRGGATRVCLVSSGRGPSDRDVDRVAAMAQELKGEQPGVEICACLGLLKDGQAERLRAAGVDAYNHNINTAESHHDTIVSTHSYSDRVDTIEKAAAAGLSPCSGLIAGLGETDEQLVEALFALKALGADSIPVNFLMPFDGTPSERTFELTPIRCVQILAMTRFVCPDTEIRIAGGREMHLRSLQALALHVANSIFLGDYLTSEGQDARADLEMLRDNGFAILGAEAKPAGTATAAHRAQTAHDIAGGTSVAGSAPDPAIRRRGAGTDVPANA</sequence>
<reference key="1">
    <citation type="submission" date="2006-12" db="EMBL/GenBank/DDBJ databases">
        <title>Complete sequence of chromosome 1 of Nocardioides sp. JS614.</title>
        <authorList>
            <person name="Copeland A."/>
            <person name="Lucas S."/>
            <person name="Lapidus A."/>
            <person name="Barry K."/>
            <person name="Detter J.C."/>
            <person name="Glavina del Rio T."/>
            <person name="Hammon N."/>
            <person name="Israni S."/>
            <person name="Dalin E."/>
            <person name="Tice H."/>
            <person name="Pitluck S."/>
            <person name="Thompson L.S."/>
            <person name="Brettin T."/>
            <person name="Bruce D."/>
            <person name="Han C."/>
            <person name="Tapia R."/>
            <person name="Schmutz J."/>
            <person name="Larimer F."/>
            <person name="Land M."/>
            <person name="Hauser L."/>
            <person name="Kyrpides N."/>
            <person name="Kim E."/>
            <person name="Mattes T."/>
            <person name="Gossett J."/>
            <person name="Richardson P."/>
        </authorList>
    </citation>
    <scope>NUCLEOTIDE SEQUENCE [LARGE SCALE GENOMIC DNA]</scope>
    <source>
        <strain>ATCC BAA-499 / JS614</strain>
    </source>
</reference>
<name>BIOB_NOCSJ</name>
<accession>A1SM80</accession>
<dbReference type="EC" id="2.8.1.6" evidence="1"/>
<dbReference type="EMBL" id="CP000509">
    <property type="protein sequence ID" value="ABL82915.1"/>
    <property type="molecule type" value="Genomic_DNA"/>
</dbReference>
<dbReference type="RefSeq" id="WP_011756849.1">
    <property type="nucleotide sequence ID" value="NC_008699.1"/>
</dbReference>
<dbReference type="SMR" id="A1SM80"/>
<dbReference type="STRING" id="196162.Noca_3415"/>
<dbReference type="KEGG" id="nca:Noca_3415"/>
<dbReference type="eggNOG" id="COG0502">
    <property type="taxonomic scope" value="Bacteria"/>
</dbReference>
<dbReference type="HOGENOM" id="CLU_033172_2_1_11"/>
<dbReference type="OrthoDB" id="9786826at2"/>
<dbReference type="UniPathway" id="UPA00078">
    <property type="reaction ID" value="UER00162"/>
</dbReference>
<dbReference type="Proteomes" id="UP000000640">
    <property type="component" value="Chromosome"/>
</dbReference>
<dbReference type="GO" id="GO:0051537">
    <property type="term" value="F:2 iron, 2 sulfur cluster binding"/>
    <property type="evidence" value="ECO:0007669"/>
    <property type="project" value="UniProtKB-KW"/>
</dbReference>
<dbReference type="GO" id="GO:0051539">
    <property type="term" value="F:4 iron, 4 sulfur cluster binding"/>
    <property type="evidence" value="ECO:0007669"/>
    <property type="project" value="UniProtKB-KW"/>
</dbReference>
<dbReference type="GO" id="GO:0004076">
    <property type="term" value="F:biotin synthase activity"/>
    <property type="evidence" value="ECO:0007669"/>
    <property type="project" value="UniProtKB-UniRule"/>
</dbReference>
<dbReference type="GO" id="GO:0005506">
    <property type="term" value="F:iron ion binding"/>
    <property type="evidence" value="ECO:0007669"/>
    <property type="project" value="UniProtKB-UniRule"/>
</dbReference>
<dbReference type="GO" id="GO:0009102">
    <property type="term" value="P:biotin biosynthetic process"/>
    <property type="evidence" value="ECO:0007669"/>
    <property type="project" value="UniProtKB-UniRule"/>
</dbReference>
<dbReference type="CDD" id="cd01335">
    <property type="entry name" value="Radical_SAM"/>
    <property type="match status" value="1"/>
</dbReference>
<dbReference type="FunFam" id="3.20.20.70:FF:000026">
    <property type="entry name" value="Biotin synthase"/>
    <property type="match status" value="1"/>
</dbReference>
<dbReference type="Gene3D" id="3.20.20.70">
    <property type="entry name" value="Aldolase class I"/>
    <property type="match status" value="1"/>
</dbReference>
<dbReference type="HAMAP" id="MF_01694">
    <property type="entry name" value="BioB"/>
    <property type="match status" value="1"/>
</dbReference>
<dbReference type="InterPro" id="IPR013785">
    <property type="entry name" value="Aldolase_TIM"/>
</dbReference>
<dbReference type="InterPro" id="IPR010722">
    <property type="entry name" value="BATS_dom"/>
</dbReference>
<dbReference type="InterPro" id="IPR002684">
    <property type="entry name" value="Biotin_synth/BioAB"/>
</dbReference>
<dbReference type="InterPro" id="IPR024177">
    <property type="entry name" value="Biotin_synthase"/>
</dbReference>
<dbReference type="InterPro" id="IPR006638">
    <property type="entry name" value="Elp3/MiaA/NifB-like_rSAM"/>
</dbReference>
<dbReference type="InterPro" id="IPR007197">
    <property type="entry name" value="rSAM"/>
</dbReference>
<dbReference type="NCBIfam" id="TIGR00433">
    <property type="entry name" value="bioB"/>
    <property type="match status" value="1"/>
</dbReference>
<dbReference type="PANTHER" id="PTHR22976">
    <property type="entry name" value="BIOTIN SYNTHASE"/>
    <property type="match status" value="1"/>
</dbReference>
<dbReference type="PANTHER" id="PTHR22976:SF2">
    <property type="entry name" value="BIOTIN SYNTHASE, MITOCHONDRIAL"/>
    <property type="match status" value="1"/>
</dbReference>
<dbReference type="Pfam" id="PF06968">
    <property type="entry name" value="BATS"/>
    <property type="match status" value="1"/>
</dbReference>
<dbReference type="Pfam" id="PF04055">
    <property type="entry name" value="Radical_SAM"/>
    <property type="match status" value="1"/>
</dbReference>
<dbReference type="PIRSF" id="PIRSF001619">
    <property type="entry name" value="Biotin_synth"/>
    <property type="match status" value="1"/>
</dbReference>
<dbReference type="SFLD" id="SFLDG01278">
    <property type="entry name" value="biotin_synthase_like"/>
    <property type="match status" value="1"/>
</dbReference>
<dbReference type="SFLD" id="SFLDS00029">
    <property type="entry name" value="Radical_SAM"/>
    <property type="match status" value="1"/>
</dbReference>
<dbReference type="SMART" id="SM00876">
    <property type="entry name" value="BATS"/>
    <property type="match status" value="1"/>
</dbReference>
<dbReference type="SMART" id="SM00729">
    <property type="entry name" value="Elp3"/>
    <property type="match status" value="1"/>
</dbReference>
<dbReference type="SUPFAM" id="SSF102114">
    <property type="entry name" value="Radical SAM enzymes"/>
    <property type="match status" value="1"/>
</dbReference>
<dbReference type="PROSITE" id="PS51918">
    <property type="entry name" value="RADICAL_SAM"/>
    <property type="match status" value="1"/>
</dbReference>
<gene>
    <name evidence="1" type="primary">bioB</name>
    <name type="ordered locus">Noca_3415</name>
</gene>